<sequence>MPKQKTHRASAKRFKRTGSGGLKRFRAFTSHRFHGKTKKQRRHLRKAGLVSSGDFKRIKAMVTGL</sequence>
<dbReference type="EMBL" id="CP000259">
    <property type="protein sequence ID" value="ABF31863.1"/>
    <property type="molecule type" value="Genomic_DNA"/>
</dbReference>
<dbReference type="RefSeq" id="WP_002985151.1">
    <property type="nucleotide sequence ID" value="NC_008021.1"/>
</dbReference>
<dbReference type="SMR" id="Q1JME9"/>
<dbReference type="GeneID" id="83690415"/>
<dbReference type="KEGG" id="spk:MGAS9429_Spy0675"/>
<dbReference type="HOGENOM" id="CLU_169643_3_1_9"/>
<dbReference type="Proteomes" id="UP000002433">
    <property type="component" value="Chromosome"/>
</dbReference>
<dbReference type="GO" id="GO:0022625">
    <property type="term" value="C:cytosolic large ribosomal subunit"/>
    <property type="evidence" value="ECO:0007669"/>
    <property type="project" value="TreeGrafter"/>
</dbReference>
<dbReference type="GO" id="GO:0003735">
    <property type="term" value="F:structural constituent of ribosome"/>
    <property type="evidence" value="ECO:0007669"/>
    <property type="project" value="InterPro"/>
</dbReference>
<dbReference type="GO" id="GO:0006412">
    <property type="term" value="P:translation"/>
    <property type="evidence" value="ECO:0007669"/>
    <property type="project" value="UniProtKB-UniRule"/>
</dbReference>
<dbReference type="FunFam" id="4.10.410.60:FF:000001">
    <property type="entry name" value="50S ribosomal protein L35"/>
    <property type="match status" value="1"/>
</dbReference>
<dbReference type="Gene3D" id="4.10.410.60">
    <property type="match status" value="1"/>
</dbReference>
<dbReference type="HAMAP" id="MF_00514">
    <property type="entry name" value="Ribosomal_bL35"/>
    <property type="match status" value="1"/>
</dbReference>
<dbReference type="InterPro" id="IPR001706">
    <property type="entry name" value="Ribosomal_bL35"/>
</dbReference>
<dbReference type="InterPro" id="IPR021137">
    <property type="entry name" value="Ribosomal_bL35-like"/>
</dbReference>
<dbReference type="InterPro" id="IPR018265">
    <property type="entry name" value="Ribosomal_bL35_CS"/>
</dbReference>
<dbReference type="InterPro" id="IPR037229">
    <property type="entry name" value="Ribosomal_bL35_sf"/>
</dbReference>
<dbReference type="NCBIfam" id="TIGR00001">
    <property type="entry name" value="rpmI_bact"/>
    <property type="match status" value="1"/>
</dbReference>
<dbReference type="PANTHER" id="PTHR33343">
    <property type="entry name" value="54S RIBOSOMAL PROTEIN BL35M"/>
    <property type="match status" value="1"/>
</dbReference>
<dbReference type="PANTHER" id="PTHR33343:SF1">
    <property type="entry name" value="LARGE RIBOSOMAL SUBUNIT PROTEIN BL35M"/>
    <property type="match status" value="1"/>
</dbReference>
<dbReference type="Pfam" id="PF01632">
    <property type="entry name" value="Ribosomal_L35p"/>
    <property type="match status" value="1"/>
</dbReference>
<dbReference type="PRINTS" id="PR00064">
    <property type="entry name" value="RIBOSOMALL35"/>
</dbReference>
<dbReference type="SUPFAM" id="SSF143034">
    <property type="entry name" value="L35p-like"/>
    <property type="match status" value="1"/>
</dbReference>
<dbReference type="PROSITE" id="PS00936">
    <property type="entry name" value="RIBOSOMAL_L35"/>
    <property type="match status" value="1"/>
</dbReference>
<gene>
    <name evidence="1" type="primary">rpmI</name>
    <name type="ordered locus">MGAS9429_Spy0675</name>
</gene>
<keyword id="KW-0687">Ribonucleoprotein</keyword>
<keyword id="KW-0689">Ribosomal protein</keyword>
<feature type="chain" id="PRO_0000258763" description="Large ribosomal subunit protein bL35">
    <location>
        <begin position="1"/>
        <end position="65"/>
    </location>
</feature>
<feature type="region of interest" description="Disordered" evidence="2">
    <location>
        <begin position="1"/>
        <end position="20"/>
    </location>
</feature>
<feature type="compositionally biased region" description="Basic residues" evidence="2">
    <location>
        <begin position="1"/>
        <end position="16"/>
    </location>
</feature>
<evidence type="ECO:0000255" key="1">
    <source>
        <dbReference type="HAMAP-Rule" id="MF_00514"/>
    </source>
</evidence>
<evidence type="ECO:0000256" key="2">
    <source>
        <dbReference type="SAM" id="MobiDB-lite"/>
    </source>
</evidence>
<evidence type="ECO:0000305" key="3"/>
<comment type="similarity">
    <text evidence="1">Belongs to the bacterial ribosomal protein bL35 family.</text>
</comment>
<organism>
    <name type="scientific">Streptococcus pyogenes serotype M12 (strain MGAS9429)</name>
    <dbReference type="NCBI Taxonomy" id="370551"/>
    <lineage>
        <taxon>Bacteria</taxon>
        <taxon>Bacillati</taxon>
        <taxon>Bacillota</taxon>
        <taxon>Bacilli</taxon>
        <taxon>Lactobacillales</taxon>
        <taxon>Streptococcaceae</taxon>
        <taxon>Streptococcus</taxon>
    </lineage>
</organism>
<reference key="1">
    <citation type="journal article" date="2006" name="Proc. Natl. Acad. Sci. U.S.A.">
        <title>Molecular genetic anatomy of inter- and intraserotype variation in the human bacterial pathogen group A Streptococcus.</title>
        <authorList>
            <person name="Beres S.B."/>
            <person name="Richter E.W."/>
            <person name="Nagiec M.J."/>
            <person name="Sumby P."/>
            <person name="Porcella S.F."/>
            <person name="DeLeo F.R."/>
            <person name="Musser J.M."/>
        </authorList>
    </citation>
    <scope>NUCLEOTIDE SEQUENCE [LARGE SCALE GENOMIC DNA]</scope>
    <source>
        <strain>MGAS9429</strain>
    </source>
</reference>
<accession>Q1JME9</accession>
<name>RL35_STRPC</name>
<proteinExistence type="inferred from homology"/>
<protein>
    <recommendedName>
        <fullName evidence="1">Large ribosomal subunit protein bL35</fullName>
    </recommendedName>
    <alternativeName>
        <fullName evidence="3">50S ribosomal protein L35</fullName>
    </alternativeName>
</protein>